<name>AUR51_RANRN</name>
<organism>
    <name type="scientific">Ranoidea raniformis</name>
    <name type="common">Southern bell frog</name>
    <name type="synonym">Litoria raniformis</name>
    <dbReference type="NCBI Taxonomy" id="116057"/>
    <lineage>
        <taxon>Eukaryota</taxon>
        <taxon>Metazoa</taxon>
        <taxon>Chordata</taxon>
        <taxon>Craniata</taxon>
        <taxon>Vertebrata</taxon>
        <taxon>Euteleostomi</taxon>
        <taxon>Amphibia</taxon>
        <taxon>Batrachia</taxon>
        <taxon>Anura</taxon>
        <taxon>Neobatrachia</taxon>
        <taxon>Hyloidea</taxon>
        <taxon>Hylidae</taxon>
        <taxon>Pelodryadinae</taxon>
        <taxon>Ranoidea</taxon>
    </lineage>
</organism>
<protein>
    <recommendedName>
        <fullName>Aurein-5.1</fullName>
    </recommendedName>
</protein>
<proteinExistence type="evidence at protein level"/>
<sequence length="25" mass="2547">GLLDIVTGLLGNLIVDVLKPKTPAS</sequence>
<reference key="1">
    <citation type="journal article" date="2000" name="Eur. J. Biochem.">
        <title>The antibiotic and anticancer active aurein peptides from the australian bell frogs Litoria aurea and Litoria raniformis the solution structure of aurein 1.2.</title>
        <authorList>
            <person name="Rozek T."/>
            <person name="Wegener K.L."/>
            <person name="Bowie J.H."/>
            <person name="Olver I.N."/>
            <person name="Carver J.A."/>
            <person name="Wallace J.C."/>
            <person name="Tyler M.J."/>
        </authorList>
    </citation>
    <scope>PROTEIN SEQUENCE</scope>
    <scope>FUNCTION</scope>
    <source>
        <tissue>Skin secretion</tissue>
    </source>
</reference>
<comment type="function">
    <text evidence="1">Has no antimicrobial or anticancer activity.</text>
</comment>
<comment type="subcellular location">
    <subcellularLocation>
        <location>Secreted</location>
    </subcellularLocation>
</comment>
<comment type="tissue specificity">
    <text>Expressed by the skin dorsal glands.</text>
</comment>
<comment type="similarity">
    <text evidence="2">Belongs to the frog skin active peptide (FSAP) family. Aurein subfamily.</text>
</comment>
<keyword id="KW-0878">Amphibian defense peptide</keyword>
<keyword id="KW-0903">Direct protein sequencing</keyword>
<keyword id="KW-0964">Secreted</keyword>
<evidence type="ECO:0000269" key="1">
    <source>
    </source>
</evidence>
<evidence type="ECO:0000305" key="2"/>
<feature type="peptide" id="PRO_0000043732" description="Aurein-5.1">
    <location>
        <begin position="1"/>
        <end position="25"/>
    </location>
</feature>
<accession>P69028</accession>
<accession>P82401</accession>
<dbReference type="GO" id="GO:0005576">
    <property type="term" value="C:extracellular region"/>
    <property type="evidence" value="ECO:0007669"/>
    <property type="project" value="UniProtKB-SubCell"/>
</dbReference>
<dbReference type="GO" id="GO:0006952">
    <property type="term" value="P:defense response"/>
    <property type="evidence" value="ECO:0007669"/>
    <property type="project" value="UniProtKB-KW"/>
</dbReference>
<dbReference type="InterPro" id="IPR032021">
    <property type="entry name" value="Frog_Litoria"/>
</dbReference>
<dbReference type="Pfam" id="PF16049">
    <property type="entry name" value="Antimicrobial24"/>
    <property type="match status" value="1"/>
</dbReference>